<protein>
    <recommendedName>
        <fullName evidence="4">CAPA-Periviscerokinin-1</fullName>
        <shortName evidence="4">CAPA-PVK-1</shortName>
    </recommendedName>
</protein>
<feature type="peptide" id="PRO_0000421639" description="CAPA-Periviscerokinin-1" evidence="3">
    <location>
        <begin position="1"/>
        <end position="11"/>
    </location>
</feature>
<feature type="modified residue" description="Threonine amide" evidence="3">
    <location>
        <position position="11"/>
    </location>
</feature>
<evidence type="ECO:0000250" key="1">
    <source>
        <dbReference type="UniProtKB" id="P83923"/>
    </source>
</evidence>
<evidence type="ECO:0000255" key="2"/>
<evidence type="ECO:0000269" key="3">
    <source>
    </source>
</evidence>
<evidence type="ECO:0000303" key="4">
    <source>
    </source>
</evidence>
<evidence type="ECO:0000305" key="5"/>
<evidence type="ECO:0000305" key="6">
    <source>
    </source>
</evidence>
<accession>B3A0J3</accession>
<reference evidence="5" key="1">
    <citation type="journal article" date="2012" name="Syst. Biol.">
        <title>Peptidomics-based phylogeny and biogeography of Mantophasmatodea (Hexapoda).</title>
        <authorList>
            <person name="Predel R."/>
            <person name="Neupert S."/>
            <person name="Huetteroth W."/>
            <person name="Kahnt J."/>
            <person name="Waidelich D."/>
            <person name="Roth S."/>
        </authorList>
    </citation>
    <scope>PROTEIN SEQUENCE</scope>
    <scope>AMIDATION AT THR-11</scope>
    <source>
        <tissue evidence="3">Abdominal perisympathetic organs</tissue>
    </source>
</reference>
<proteinExistence type="evidence at protein level"/>
<organism>
    <name type="scientific">Pachyphasma brandbergense</name>
    <name type="common">Gladiator</name>
    <name type="synonym">Heel-walker</name>
    <dbReference type="NCBI Taxonomy" id="1041430"/>
    <lineage>
        <taxon>Eukaryota</taxon>
        <taxon>Metazoa</taxon>
        <taxon>Ecdysozoa</taxon>
        <taxon>Arthropoda</taxon>
        <taxon>Hexapoda</taxon>
        <taxon>Insecta</taxon>
        <taxon>Pterygota</taxon>
        <taxon>Neoptera</taxon>
        <taxon>Polyneoptera</taxon>
        <taxon>Mantophasmatodea</taxon>
        <taxon>Mantophasmatidae</taxon>
        <taxon>Pachyphasma</taxon>
    </lineage>
</organism>
<sequence>EAAGLLAFPRT</sequence>
<comment type="function">
    <text evidence="1">Mediates visceral muscle contractile activity (myotropic activity).</text>
</comment>
<comment type="subcellular location">
    <subcellularLocation>
        <location evidence="6">Secreted</location>
    </subcellularLocation>
</comment>
<comment type="similarity">
    <text evidence="2">Belongs to the periviscerokinin family.</text>
</comment>
<dbReference type="GO" id="GO:0005576">
    <property type="term" value="C:extracellular region"/>
    <property type="evidence" value="ECO:0007669"/>
    <property type="project" value="UniProtKB-SubCell"/>
</dbReference>
<dbReference type="GO" id="GO:0007218">
    <property type="term" value="P:neuropeptide signaling pathway"/>
    <property type="evidence" value="ECO:0007669"/>
    <property type="project" value="UniProtKB-KW"/>
</dbReference>
<name>PVK1_PACBA</name>
<keyword id="KW-0027">Amidation</keyword>
<keyword id="KW-0903">Direct protein sequencing</keyword>
<keyword id="KW-0527">Neuropeptide</keyword>
<keyword id="KW-0964">Secreted</keyword>